<organism>
    <name type="scientific">Synechococcus sp. (strain CC9902)</name>
    <dbReference type="NCBI Taxonomy" id="316279"/>
    <lineage>
        <taxon>Bacteria</taxon>
        <taxon>Bacillati</taxon>
        <taxon>Cyanobacteriota</taxon>
        <taxon>Cyanophyceae</taxon>
        <taxon>Synechococcales</taxon>
        <taxon>Synechococcaceae</taxon>
        <taxon>Synechococcus</taxon>
    </lineage>
</organism>
<dbReference type="EC" id="5.3.1.9" evidence="1"/>
<dbReference type="EMBL" id="CP000097">
    <property type="protein sequence ID" value="ABB26069.1"/>
    <property type="molecule type" value="Genomic_DNA"/>
</dbReference>
<dbReference type="RefSeq" id="WP_011359899.1">
    <property type="nucleotide sequence ID" value="NC_007513.1"/>
</dbReference>
<dbReference type="SMR" id="Q3AXV8"/>
<dbReference type="STRING" id="316279.Syncc9902_1105"/>
<dbReference type="KEGG" id="sye:Syncc9902_1105"/>
<dbReference type="eggNOG" id="COG0166">
    <property type="taxonomic scope" value="Bacteria"/>
</dbReference>
<dbReference type="HOGENOM" id="CLU_033288_0_0_3"/>
<dbReference type="OrthoDB" id="140919at2"/>
<dbReference type="UniPathway" id="UPA00109">
    <property type="reaction ID" value="UER00181"/>
</dbReference>
<dbReference type="UniPathway" id="UPA00138"/>
<dbReference type="Proteomes" id="UP000002712">
    <property type="component" value="Chromosome"/>
</dbReference>
<dbReference type="GO" id="GO:0005829">
    <property type="term" value="C:cytosol"/>
    <property type="evidence" value="ECO:0007669"/>
    <property type="project" value="TreeGrafter"/>
</dbReference>
<dbReference type="GO" id="GO:0097367">
    <property type="term" value="F:carbohydrate derivative binding"/>
    <property type="evidence" value="ECO:0007669"/>
    <property type="project" value="InterPro"/>
</dbReference>
<dbReference type="GO" id="GO:0004347">
    <property type="term" value="F:glucose-6-phosphate isomerase activity"/>
    <property type="evidence" value="ECO:0007669"/>
    <property type="project" value="UniProtKB-UniRule"/>
</dbReference>
<dbReference type="GO" id="GO:0048029">
    <property type="term" value="F:monosaccharide binding"/>
    <property type="evidence" value="ECO:0007669"/>
    <property type="project" value="TreeGrafter"/>
</dbReference>
<dbReference type="GO" id="GO:0006094">
    <property type="term" value="P:gluconeogenesis"/>
    <property type="evidence" value="ECO:0007669"/>
    <property type="project" value="UniProtKB-UniRule"/>
</dbReference>
<dbReference type="GO" id="GO:0051156">
    <property type="term" value="P:glucose 6-phosphate metabolic process"/>
    <property type="evidence" value="ECO:0007669"/>
    <property type="project" value="TreeGrafter"/>
</dbReference>
<dbReference type="GO" id="GO:0006096">
    <property type="term" value="P:glycolytic process"/>
    <property type="evidence" value="ECO:0007669"/>
    <property type="project" value="UniProtKB-UniRule"/>
</dbReference>
<dbReference type="CDD" id="cd05015">
    <property type="entry name" value="SIS_PGI_1"/>
    <property type="match status" value="1"/>
</dbReference>
<dbReference type="CDD" id="cd05016">
    <property type="entry name" value="SIS_PGI_2"/>
    <property type="match status" value="1"/>
</dbReference>
<dbReference type="FunFam" id="3.40.50.10490:FF:000021">
    <property type="entry name" value="Glucose-6-phosphate isomerase"/>
    <property type="match status" value="1"/>
</dbReference>
<dbReference type="Gene3D" id="3.40.50.10490">
    <property type="entry name" value="Glucose-6-phosphate isomerase like protein, domain 1"/>
    <property type="match status" value="2"/>
</dbReference>
<dbReference type="HAMAP" id="MF_00473">
    <property type="entry name" value="G6P_isomerase"/>
    <property type="match status" value="1"/>
</dbReference>
<dbReference type="InterPro" id="IPR001672">
    <property type="entry name" value="G6P_Isomerase"/>
</dbReference>
<dbReference type="InterPro" id="IPR018189">
    <property type="entry name" value="Phosphoglucose_isomerase_CS"/>
</dbReference>
<dbReference type="InterPro" id="IPR046348">
    <property type="entry name" value="SIS_dom_sf"/>
</dbReference>
<dbReference type="InterPro" id="IPR035476">
    <property type="entry name" value="SIS_PGI_1"/>
</dbReference>
<dbReference type="InterPro" id="IPR035482">
    <property type="entry name" value="SIS_PGI_2"/>
</dbReference>
<dbReference type="NCBIfam" id="NF010696">
    <property type="entry name" value="PRK14096.1"/>
    <property type="match status" value="1"/>
</dbReference>
<dbReference type="PANTHER" id="PTHR11469">
    <property type="entry name" value="GLUCOSE-6-PHOSPHATE ISOMERASE"/>
    <property type="match status" value="1"/>
</dbReference>
<dbReference type="PANTHER" id="PTHR11469:SF1">
    <property type="entry name" value="GLUCOSE-6-PHOSPHATE ISOMERASE"/>
    <property type="match status" value="1"/>
</dbReference>
<dbReference type="Pfam" id="PF00342">
    <property type="entry name" value="PGI"/>
    <property type="match status" value="2"/>
</dbReference>
<dbReference type="PRINTS" id="PR00662">
    <property type="entry name" value="G6PISOMERASE"/>
</dbReference>
<dbReference type="SUPFAM" id="SSF53697">
    <property type="entry name" value="SIS domain"/>
    <property type="match status" value="1"/>
</dbReference>
<dbReference type="PROSITE" id="PS00174">
    <property type="entry name" value="P_GLUCOSE_ISOMERASE_2"/>
    <property type="match status" value="1"/>
</dbReference>
<dbReference type="PROSITE" id="PS51463">
    <property type="entry name" value="P_GLUCOSE_ISOMERASE_3"/>
    <property type="match status" value="1"/>
</dbReference>
<reference key="1">
    <citation type="submission" date="2005-08" db="EMBL/GenBank/DDBJ databases">
        <title>Complete sequence of Synechococcus sp. CC9902.</title>
        <authorList>
            <person name="Copeland A."/>
            <person name="Lucas S."/>
            <person name="Lapidus A."/>
            <person name="Barry K."/>
            <person name="Detter J.C."/>
            <person name="Glavina T."/>
            <person name="Hammon N."/>
            <person name="Israni S."/>
            <person name="Pitluck S."/>
            <person name="Martinez M."/>
            <person name="Schmutz J."/>
            <person name="Larimer F."/>
            <person name="Land M."/>
            <person name="Kyrpides N."/>
            <person name="Ivanova N."/>
            <person name="Richardson P."/>
        </authorList>
    </citation>
    <scope>NUCLEOTIDE SEQUENCE [LARGE SCALE GENOMIC DNA]</scope>
    <source>
        <strain>CC9902</strain>
    </source>
</reference>
<keyword id="KW-0963">Cytoplasm</keyword>
<keyword id="KW-0312">Gluconeogenesis</keyword>
<keyword id="KW-0324">Glycolysis</keyword>
<keyword id="KW-0413">Isomerase</keyword>
<keyword id="KW-1185">Reference proteome</keyword>
<feature type="chain" id="PRO_0000252655" description="Glucose-6-phosphate isomerase">
    <location>
        <begin position="1"/>
        <end position="532"/>
    </location>
</feature>
<feature type="active site" description="Proton donor" evidence="1">
    <location>
        <position position="330"/>
    </location>
</feature>
<feature type="active site" evidence="1">
    <location>
        <position position="359"/>
    </location>
</feature>
<feature type="active site" evidence="1">
    <location>
        <position position="461"/>
    </location>
</feature>
<sequence>MSFPDFSASDAQIQWQRFCDLLWYHDDLGLWLDVSRMHLNASELEALQPAMDRAFTAMHELEAGAIANPDEERQVGHYWLRNPQLAPSDDLRTHIAREVDDIEAFGRGVVHGEIKAPSGVPFTDVLWIGIGGSGLGPALMIRALKNNNQGLPFHFLDNVDPNGMSNVLGGLAGRFKTTLVVTVSKSGGTPEPHIGMEQARLKLEAAGGKWAGQAVAITMLNSRLDQQAQQEAWLKRFDMFDWVGGRTSITSAVGLLPGALIGCDIRDFLAGAAQMDEATRVADSRRNPAALMAASWYVAGEGKGRRDMVVLPYRDRLEVFSRYLQQLVMESLGKRLDRDGNVVHQGIAVYGNKGSTDQHAYVQQLRDGVDNFFATFIEELEDSEDIPVIKNERPGDFLDGFLQGTRSALTEGGRQNMTITMRCFDERRLGALVALFERAVGLYGELVNVNAYHQPGVEAGKKAAAAILDLQQRVEEVLQDGVPRTVSEIRQVLDDGSDESIFWIMRHLTGNKRQYNAQGDWSSPAGMRFSKD</sequence>
<accession>Q3AXV8</accession>
<protein>
    <recommendedName>
        <fullName evidence="1">Glucose-6-phosphate isomerase</fullName>
        <shortName evidence="1">GPI</shortName>
        <ecNumber evidence="1">5.3.1.9</ecNumber>
    </recommendedName>
    <alternativeName>
        <fullName evidence="1">Phosphoglucose isomerase</fullName>
        <shortName evidence="1">PGI</shortName>
    </alternativeName>
    <alternativeName>
        <fullName evidence="1">Phosphohexose isomerase</fullName>
        <shortName evidence="1">PHI</shortName>
    </alternativeName>
</protein>
<proteinExistence type="inferred from homology"/>
<gene>
    <name evidence="1" type="primary">pgi</name>
    <name type="ordered locus">Syncc9902_1105</name>
</gene>
<name>G6PI_SYNS9</name>
<comment type="function">
    <text evidence="1">Catalyzes the reversible isomerization of glucose-6-phosphate to fructose-6-phosphate.</text>
</comment>
<comment type="catalytic activity">
    <reaction evidence="1">
        <text>alpha-D-glucose 6-phosphate = beta-D-fructose 6-phosphate</text>
        <dbReference type="Rhea" id="RHEA:11816"/>
        <dbReference type="ChEBI" id="CHEBI:57634"/>
        <dbReference type="ChEBI" id="CHEBI:58225"/>
        <dbReference type="EC" id="5.3.1.9"/>
    </reaction>
</comment>
<comment type="pathway">
    <text evidence="1">Carbohydrate biosynthesis; gluconeogenesis.</text>
</comment>
<comment type="pathway">
    <text evidence="1">Carbohydrate degradation; glycolysis; D-glyceraldehyde 3-phosphate and glycerone phosphate from D-glucose: step 2/4.</text>
</comment>
<comment type="subcellular location">
    <subcellularLocation>
        <location evidence="1">Cytoplasm</location>
    </subcellularLocation>
</comment>
<comment type="similarity">
    <text evidence="1">Belongs to the GPI family.</text>
</comment>
<evidence type="ECO:0000255" key="1">
    <source>
        <dbReference type="HAMAP-Rule" id="MF_00473"/>
    </source>
</evidence>